<evidence type="ECO:0000250" key="1"/>
<evidence type="ECO:0000255" key="2">
    <source>
        <dbReference type="PROSITE-ProRule" id="PRU00212"/>
    </source>
</evidence>
<evidence type="ECO:0000256" key="3">
    <source>
        <dbReference type="SAM" id="MobiDB-lite"/>
    </source>
</evidence>
<evidence type="ECO:0000269" key="4">
    <source>
    </source>
</evidence>
<evidence type="ECO:0000269" key="5">
    <source>
    </source>
</evidence>
<evidence type="ECO:0000305" key="6"/>
<comment type="function">
    <text evidence="1 4">Mediates transcriptional and post-transcriptional regulation of SLC5A1. Inhibits a dynamin and PKC-dependent exocytotic pathway of SLC5A1. Also involved in transcriptional regulation of SLC22A2. Exhibits glucose-dependent, short-term inhibition of SLC5A1 and SLC22A2 by inhibiting the release of vesicles from the trans-Golgi network (By similarity). Regulates the expression of SLC5A1 in a tissue-specific manner and is specifically involved in its regulation in the small intestine.</text>
</comment>
<comment type="subunit">
    <text evidence="5">Interacts with YRDC.</text>
</comment>
<comment type="subcellular location">
    <subcellularLocation>
        <location evidence="4">Cell membrane</location>
    </subcellularLocation>
    <subcellularLocation>
        <location evidence="4">Nucleus</location>
    </subcellularLocation>
    <subcellularLocation>
        <location evidence="1">Golgi apparatus</location>
        <location evidence="1">trans-Golgi network</location>
    </subcellularLocation>
    <text>Localizes at the inner side of the plasma membrane.</text>
</comment>
<comment type="tissue specificity">
    <text evidence="4">Expressed in epithelial and subepithelial cells of small intestine.</text>
</comment>
<comment type="disruption phenotype">
    <text evidence="4">Mice show a specific phenotype: first, a post-transcriptional up-regulation of SLC5A1 in the small intestine, with an increased d-glucose absorption rate and capacity; second, an increased food intake that results in a visceral type of obesity.</text>
</comment>
<protein>
    <recommendedName>
        <fullName>Regulatory solute carrier protein family 1 member 1</fullName>
    </recommendedName>
    <alternativeName>
        <fullName>Regulatory subunit of SGLT1</fullName>
    </alternativeName>
    <alternativeName>
        <fullName>Transporter regulator RS1</fullName>
        <shortName>mRS1</shortName>
    </alternativeName>
</protein>
<feature type="chain" id="PRO_0000324151" description="Regulatory solute carrier protein family 1 member 1">
    <location>
        <begin position="1"/>
        <end position="582"/>
    </location>
</feature>
<feature type="domain" description="UBA" evidence="2">
    <location>
        <begin position="536"/>
        <end position="576"/>
    </location>
</feature>
<feature type="region of interest" description="Disordered" evidence="3">
    <location>
        <begin position="1"/>
        <end position="32"/>
    </location>
</feature>
<feature type="region of interest" description="Disordered" evidence="3">
    <location>
        <begin position="56"/>
        <end position="76"/>
    </location>
</feature>
<feature type="region of interest" description="Disordered" evidence="3">
    <location>
        <begin position="143"/>
        <end position="180"/>
    </location>
</feature>
<feature type="region of interest" description="Disordered" evidence="3">
    <location>
        <begin position="303"/>
        <end position="325"/>
    </location>
</feature>
<feature type="region of interest" description="Disordered" evidence="3">
    <location>
        <begin position="363"/>
        <end position="384"/>
    </location>
</feature>
<feature type="region of interest" description="Disordered" evidence="3">
    <location>
        <begin position="390"/>
        <end position="409"/>
    </location>
</feature>
<feature type="region of interest" description="Disordered" evidence="3">
    <location>
        <begin position="426"/>
        <end position="452"/>
    </location>
</feature>
<feature type="region of interest" description="Disordered" evidence="3">
    <location>
        <begin position="483"/>
        <end position="529"/>
    </location>
</feature>
<feature type="compositionally biased region" description="Polar residues" evidence="3">
    <location>
        <begin position="16"/>
        <end position="32"/>
    </location>
</feature>
<feature type="compositionally biased region" description="Polar residues" evidence="3">
    <location>
        <begin position="148"/>
        <end position="179"/>
    </location>
</feature>
<feature type="compositionally biased region" description="Polar residues" evidence="3">
    <location>
        <begin position="390"/>
        <end position="408"/>
    </location>
</feature>
<feature type="compositionally biased region" description="Basic and acidic residues" evidence="3">
    <location>
        <begin position="438"/>
        <end position="452"/>
    </location>
</feature>
<feature type="compositionally biased region" description="Basic and acidic residues" evidence="3">
    <location>
        <begin position="490"/>
        <end position="503"/>
    </location>
</feature>
<feature type="sequence conflict" description="In Ref. 4; AAI50753." evidence="6" ref="4">
    <original>R</original>
    <variation>H</variation>
    <location>
        <position position="135"/>
    </location>
</feature>
<feature type="sequence conflict" description="In Ref. 4; AAI50753." evidence="6" ref="4">
    <original>A</original>
    <variation>V</variation>
    <location>
        <position position="141"/>
    </location>
</feature>
<feature type="sequence conflict" description="In Ref. 4; AAI50753." evidence="6" ref="4">
    <original>C</original>
    <variation>G</variation>
    <location>
        <position position="185"/>
    </location>
</feature>
<feature type="sequence conflict" description="In Ref. 4; AAI50753." evidence="6" ref="4">
    <original>A</original>
    <variation>T</variation>
    <location>
        <position position="201"/>
    </location>
</feature>
<feature type="sequence conflict" description="In Ref. 4; AAI50753." evidence="6" ref="4">
    <original>G</original>
    <variation>S</variation>
    <location>
        <position position="323"/>
    </location>
</feature>
<feature type="sequence conflict" description="In Ref. 4; AAI50753." evidence="6" ref="4">
    <original>S</original>
    <variation>P</variation>
    <location>
        <position position="381"/>
    </location>
</feature>
<feature type="sequence conflict" description="In Ref. 4; AAI50753." evidence="6" ref="4">
    <original>D</original>
    <variation>G</variation>
    <location>
        <position position="440"/>
    </location>
</feature>
<keyword id="KW-1003">Cell membrane</keyword>
<keyword id="KW-0333">Golgi apparatus</keyword>
<keyword id="KW-0472">Membrane</keyword>
<keyword id="KW-0539">Nucleus</keyword>
<keyword id="KW-1185">Reference proteome</keyword>
<keyword id="KW-0804">Transcription</keyword>
<keyword id="KW-0805">Transcription regulation</keyword>
<proteinExistence type="evidence at protein level"/>
<gene>
    <name type="primary">Rsc1a1</name>
</gene>
<accession>Q9ER99</accession>
<accession>B1AUM1</accession>
<accession>B2RWX9</accession>
<accession>Q78HA0</accession>
<accession>Q9CVU8</accession>
<name>RSCA1_MOUSE</name>
<dbReference type="EMBL" id="Y11917">
    <property type="protein sequence ID" value="CAA72676.2"/>
    <property type="molecule type" value="Genomic_DNA"/>
</dbReference>
<dbReference type="EMBL" id="AL671733">
    <property type="status" value="NOT_ANNOTATED_CDS"/>
    <property type="molecule type" value="Genomic_DNA"/>
</dbReference>
<dbReference type="EMBL" id="CH466615">
    <property type="protein sequence ID" value="EDL13393.1"/>
    <property type="molecule type" value="Genomic_DNA"/>
</dbReference>
<dbReference type="EMBL" id="BC031491">
    <property type="status" value="NOT_ANNOTATED_CDS"/>
    <property type="molecule type" value="mRNA"/>
</dbReference>
<dbReference type="EMBL" id="BC150752">
    <property type="protein sequence ID" value="AAI50753.1"/>
    <property type="molecule type" value="mRNA"/>
</dbReference>
<dbReference type="EMBL" id="AK006435">
    <property type="protein sequence ID" value="BAB24588.1"/>
    <property type="molecule type" value="mRNA"/>
</dbReference>
<dbReference type="CCDS" id="CCDS18879.1"/>
<dbReference type="RefSeq" id="NP_076033.4">
    <property type="nucleotide sequence ID" value="NM_023544.5"/>
</dbReference>
<dbReference type="SMR" id="Q9ER99"/>
<dbReference type="BioGRID" id="213804">
    <property type="interactions" value="1"/>
</dbReference>
<dbReference type="FunCoup" id="Q9ER99">
    <property type="interactions" value="4"/>
</dbReference>
<dbReference type="STRING" id="10090.ENSMUSP00000101408"/>
<dbReference type="GlyGen" id="Q9ER99">
    <property type="glycosylation" value="1 site, 1 N-linked glycan (1 site)"/>
</dbReference>
<dbReference type="iPTMnet" id="Q9ER99"/>
<dbReference type="PhosphoSitePlus" id="Q9ER99"/>
<dbReference type="SwissPalm" id="Q9ER99"/>
<dbReference type="PaxDb" id="10090-ENSMUSP00000101408"/>
<dbReference type="ProteomicsDB" id="260738"/>
<dbReference type="DNASU" id="69994"/>
<dbReference type="GeneID" id="69994"/>
<dbReference type="KEGG" id="mmu:69994"/>
<dbReference type="UCSC" id="uc012dod.1">
    <property type="organism name" value="mouse"/>
</dbReference>
<dbReference type="AGR" id="MGI:3526447"/>
<dbReference type="CTD" id="6248"/>
<dbReference type="MGI" id="MGI:3526447">
    <property type="gene designation" value="Rsc1a1"/>
</dbReference>
<dbReference type="VEuPathDB" id="HostDB:ENSMUSG00000040715"/>
<dbReference type="VEuPathDB" id="HostDB:ENSMUSG00000078515"/>
<dbReference type="eggNOG" id="ENOG502RYJA">
    <property type="taxonomic scope" value="Eukaryota"/>
</dbReference>
<dbReference type="HOGENOM" id="CLU_032729_0_0_1"/>
<dbReference type="InParanoid" id="Q9ER99"/>
<dbReference type="OMA" id="SPEHQIT"/>
<dbReference type="OrthoDB" id="1047367at2759"/>
<dbReference type="PhylomeDB" id="Q9ER99"/>
<dbReference type="TreeFam" id="TF335675"/>
<dbReference type="BioGRID-ORCS" id="69994">
    <property type="hits" value="0 hits in 44 CRISPR screens"/>
</dbReference>
<dbReference type="PRO" id="PR:Q9ER99"/>
<dbReference type="Proteomes" id="UP000000589">
    <property type="component" value="Chromosome 4"/>
</dbReference>
<dbReference type="RNAct" id="Q9ER99">
    <property type="molecule type" value="protein"/>
</dbReference>
<dbReference type="Bgee" id="ENSMUSG00000040715">
    <property type="expression patterns" value="Expressed in ectoplacental cone and 55 other cell types or tissues"/>
</dbReference>
<dbReference type="ExpressionAtlas" id="Q9ER99">
    <property type="expression patterns" value="baseline and differential"/>
</dbReference>
<dbReference type="GO" id="GO:0005903">
    <property type="term" value="C:brush border"/>
    <property type="evidence" value="ECO:0000314"/>
    <property type="project" value="MGI"/>
</dbReference>
<dbReference type="GO" id="GO:0005794">
    <property type="term" value="C:Golgi apparatus"/>
    <property type="evidence" value="ECO:0007669"/>
    <property type="project" value="UniProtKB-SubCell"/>
</dbReference>
<dbReference type="GO" id="GO:0016020">
    <property type="term" value="C:membrane"/>
    <property type="evidence" value="ECO:0000314"/>
    <property type="project" value="MGI"/>
</dbReference>
<dbReference type="GO" id="GO:0005634">
    <property type="term" value="C:nucleus"/>
    <property type="evidence" value="ECO:0007669"/>
    <property type="project" value="UniProtKB-SubCell"/>
</dbReference>
<dbReference type="GO" id="GO:0005886">
    <property type="term" value="C:plasma membrane"/>
    <property type="evidence" value="ECO:0007669"/>
    <property type="project" value="UniProtKB-SubCell"/>
</dbReference>
<dbReference type="GO" id="GO:0050892">
    <property type="term" value="P:intestinal absorption"/>
    <property type="evidence" value="ECO:0000315"/>
    <property type="project" value="MGI"/>
</dbReference>
<dbReference type="GO" id="GO:0032243">
    <property type="term" value="P:negative regulation of nucleoside transport"/>
    <property type="evidence" value="ECO:0000315"/>
    <property type="project" value="ARUK-UCL"/>
</dbReference>
<dbReference type="GO" id="GO:1903077">
    <property type="term" value="P:negative regulation of protein localization to plasma membrane"/>
    <property type="evidence" value="ECO:0000315"/>
    <property type="project" value="ARUK-UCL"/>
</dbReference>
<dbReference type="GO" id="GO:0051051">
    <property type="term" value="P:negative regulation of transport"/>
    <property type="evidence" value="ECO:0000266"/>
    <property type="project" value="MGI"/>
</dbReference>
<dbReference type="InterPro" id="IPR015940">
    <property type="entry name" value="UBA"/>
</dbReference>
<dbReference type="PANTHER" id="PTHR15397:SF3">
    <property type="entry name" value="DNA DAMAGE INDUCIBLE 1 HOMOLOG 2"/>
    <property type="match status" value="1"/>
</dbReference>
<dbReference type="PANTHER" id="PTHR15397">
    <property type="entry name" value="SODIUM-GLUCOSE COTRANSPORTER REGULATORY PROTEIN -RELATED"/>
    <property type="match status" value="1"/>
</dbReference>
<dbReference type="SMART" id="SM00165">
    <property type="entry name" value="UBA"/>
    <property type="match status" value="1"/>
</dbReference>
<dbReference type="PROSITE" id="PS50030">
    <property type="entry name" value="UBA"/>
    <property type="match status" value="1"/>
</dbReference>
<sequence>MSSLPTSDGFDHPAPSGQSPEVGSPTSLARSVSASVCAIKPGDPNSIESLAMEATKASAEFQTNSKKTDPPPLQVLPDLASSAEQSLAMPFHKSSKEAVVAGNLEKSVEKGTQGLRVYLHTRQDASLTLTTTGMREPQIFAEEKSWHPENQTPSPVNGLQQHRETGSVQREAGQQSVPQDQGCLCDAEDLELHEEVVSLEALRKGELQRHAHLPSAEKGLPASGLCSCPCSEALMEVDTAEQSLVAMCSSTGRQDAVIKSPSVAHLASDNPTMEVETLQSNPSCEPVEHSILTRELQLPEDNVDMSTMDNKDDNSSSLLSGHGQPSVESAEEFCSSVTVALKELHELLVISCKPASEESPEHVTCQSEIGAESQPSVSDLSGRRVQSVHLTPSDQYSQGSCHQATSESGKTEIVGTAPCAAVEDEASTSFEGLGDGLSPDREDVRRSTESARKSCSVAITSAKLSEQLPCTSGVEIAPELAASEGAHSQPSEHVHNPGPDRPETSSVCPGAGLPRSGLDQPPTQSLSTPSVLPPFIFPAADVDRILGAGFTLQEALGALHRVGGNADLALLVLLAKNIVVPT</sequence>
<reference key="1">
    <citation type="submission" date="2011-05" db="EMBL/GenBank/DDBJ databases">
        <authorList>
            <person name="Baumgarten K."/>
            <person name="Gorboulev V."/>
            <person name="Koepsell H."/>
        </authorList>
    </citation>
    <scope>NUCLEOTIDE SEQUENCE [GENOMIC DNA]</scope>
</reference>
<reference key="2">
    <citation type="journal article" date="2009" name="PLoS Biol.">
        <title>Lineage-specific biology revealed by a finished genome assembly of the mouse.</title>
        <authorList>
            <person name="Church D.M."/>
            <person name="Goodstadt L."/>
            <person name="Hillier L.W."/>
            <person name="Zody M.C."/>
            <person name="Goldstein S."/>
            <person name="She X."/>
            <person name="Bult C.J."/>
            <person name="Agarwala R."/>
            <person name="Cherry J.L."/>
            <person name="DiCuccio M."/>
            <person name="Hlavina W."/>
            <person name="Kapustin Y."/>
            <person name="Meric P."/>
            <person name="Maglott D."/>
            <person name="Birtle Z."/>
            <person name="Marques A.C."/>
            <person name="Graves T."/>
            <person name="Zhou S."/>
            <person name="Teague B."/>
            <person name="Potamousis K."/>
            <person name="Churas C."/>
            <person name="Place M."/>
            <person name="Herschleb J."/>
            <person name="Runnheim R."/>
            <person name="Forrest D."/>
            <person name="Amos-Landgraf J."/>
            <person name="Schwartz D.C."/>
            <person name="Cheng Z."/>
            <person name="Lindblad-Toh K."/>
            <person name="Eichler E.E."/>
            <person name="Ponting C.P."/>
        </authorList>
    </citation>
    <scope>NUCLEOTIDE SEQUENCE [LARGE SCALE GENOMIC DNA]</scope>
    <source>
        <strain>C57BL/6J</strain>
    </source>
</reference>
<reference key="3">
    <citation type="submission" date="2005-07" db="EMBL/GenBank/DDBJ databases">
        <authorList>
            <person name="Mural R.J."/>
            <person name="Adams M.D."/>
            <person name="Myers E.W."/>
            <person name="Smith H.O."/>
            <person name="Venter J.C."/>
        </authorList>
    </citation>
    <scope>NUCLEOTIDE SEQUENCE [LARGE SCALE GENOMIC DNA]</scope>
</reference>
<reference key="4">
    <citation type="journal article" date="2004" name="Genome Res.">
        <title>The status, quality, and expansion of the NIH full-length cDNA project: the Mammalian Gene Collection (MGC).</title>
        <authorList>
            <consortium name="The MGC Project Team"/>
        </authorList>
    </citation>
    <scope>NUCLEOTIDE SEQUENCE [LARGE SCALE MRNA]</scope>
    <source>
        <strain>FVB/N</strain>
        <tissue>Brain</tissue>
        <tissue>Mammary tumor</tissue>
    </source>
</reference>
<reference key="5">
    <citation type="journal article" date="2005" name="Science">
        <title>The transcriptional landscape of the mammalian genome.</title>
        <authorList>
            <person name="Carninci P."/>
            <person name="Kasukawa T."/>
            <person name="Katayama S."/>
            <person name="Gough J."/>
            <person name="Frith M.C."/>
            <person name="Maeda N."/>
            <person name="Oyama R."/>
            <person name="Ravasi T."/>
            <person name="Lenhard B."/>
            <person name="Wells C."/>
            <person name="Kodzius R."/>
            <person name="Shimokawa K."/>
            <person name="Bajic V.B."/>
            <person name="Brenner S.E."/>
            <person name="Batalov S."/>
            <person name="Forrest A.R."/>
            <person name="Zavolan M."/>
            <person name="Davis M.J."/>
            <person name="Wilming L.G."/>
            <person name="Aidinis V."/>
            <person name="Allen J.E."/>
            <person name="Ambesi-Impiombato A."/>
            <person name="Apweiler R."/>
            <person name="Aturaliya R.N."/>
            <person name="Bailey T.L."/>
            <person name="Bansal M."/>
            <person name="Baxter L."/>
            <person name="Beisel K.W."/>
            <person name="Bersano T."/>
            <person name="Bono H."/>
            <person name="Chalk A.M."/>
            <person name="Chiu K.P."/>
            <person name="Choudhary V."/>
            <person name="Christoffels A."/>
            <person name="Clutterbuck D.R."/>
            <person name="Crowe M.L."/>
            <person name="Dalla E."/>
            <person name="Dalrymple B.P."/>
            <person name="de Bono B."/>
            <person name="Della Gatta G."/>
            <person name="di Bernardo D."/>
            <person name="Down T."/>
            <person name="Engstrom P."/>
            <person name="Fagiolini M."/>
            <person name="Faulkner G."/>
            <person name="Fletcher C.F."/>
            <person name="Fukushima T."/>
            <person name="Furuno M."/>
            <person name="Futaki S."/>
            <person name="Gariboldi M."/>
            <person name="Georgii-Hemming P."/>
            <person name="Gingeras T.R."/>
            <person name="Gojobori T."/>
            <person name="Green R.E."/>
            <person name="Gustincich S."/>
            <person name="Harbers M."/>
            <person name="Hayashi Y."/>
            <person name="Hensch T.K."/>
            <person name="Hirokawa N."/>
            <person name="Hill D."/>
            <person name="Huminiecki L."/>
            <person name="Iacono M."/>
            <person name="Ikeo K."/>
            <person name="Iwama A."/>
            <person name="Ishikawa T."/>
            <person name="Jakt M."/>
            <person name="Kanapin A."/>
            <person name="Katoh M."/>
            <person name="Kawasawa Y."/>
            <person name="Kelso J."/>
            <person name="Kitamura H."/>
            <person name="Kitano H."/>
            <person name="Kollias G."/>
            <person name="Krishnan S.P."/>
            <person name="Kruger A."/>
            <person name="Kummerfeld S.K."/>
            <person name="Kurochkin I.V."/>
            <person name="Lareau L.F."/>
            <person name="Lazarevic D."/>
            <person name="Lipovich L."/>
            <person name="Liu J."/>
            <person name="Liuni S."/>
            <person name="McWilliam S."/>
            <person name="Madan Babu M."/>
            <person name="Madera M."/>
            <person name="Marchionni L."/>
            <person name="Matsuda H."/>
            <person name="Matsuzawa S."/>
            <person name="Miki H."/>
            <person name="Mignone F."/>
            <person name="Miyake S."/>
            <person name="Morris K."/>
            <person name="Mottagui-Tabar S."/>
            <person name="Mulder N."/>
            <person name="Nakano N."/>
            <person name="Nakauchi H."/>
            <person name="Ng P."/>
            <person name="Nilsson R."/>
            <person name="Nishiguchi S."/>
            <person name="Nishikawa S."/>
            <person name="Nori F."/>
            <person name="Ohara O."/>
            <person name="Okazaki Y."/>
            <person name="Orlando V."/>
            <person name="Pang K.C."/>
            <person name="Pavan W.J."/>
            <person name="Pavesi G."/>
            <person name="Pesole G."/>
            <person name="Petrovsky N."/>
            <person name="Piazza S."/>
            <person name="Reed J."/>
            <person name="Reid J.F."/>
            <person name="Ring B.Z."/>
            <person name="Ringwald M."/>
            <person name="Rost B."/>
            <person name="Ruan Y."/>
            <person name="Salzberg S.L."/>
            <person name="Sandelin A."/>
            <person name="Schneider C."/>
            <person name="Schoenbach C."/>
            <person name="Sekiguchi K."/>
            <person name="Semple C.A."/>
            <person name="Seno S."/>
            <person name="Sessa L."/>
            <person name="Sheng Y."/>
            <person name="Shibata Y."/>
            <person name="Shimada H."/>
            <person name="Shimada K."/>
            <person name="Silva D."/>
            <person name="Sinclair B."/>
            <person name="Sperling S."/>
            <person name="Stupka E."/>
            <person name="Sugiura K."/>
            <person name="Sultana R."/>
            <person name="Takenaka Y."/>
            <person name="Taki K."/>
            <person name="Tammoja K."/>
            <person name="Tan S.L."/>
            <person name="Tang S."/>
            <person name="Taylor M.S."/>
            <person name="Tegner J."/>
            <person name="Teichmann S.A."/>
            <person name="Ueda H.R."/>
            <person name="van Nimwegen E."/>
            <person name="Verardo R."/>
            <person name="Wei C.L."/>
            <person name="Yagi K."/>
            <person name="Yamanishi H."/>
            <person name="Zabarovsky E."/>
            <person name="Zhu S."/>
            <person name="Zimmer A."/>
            <person name="Hide W."/>
            <person name="Bult C."/>
            <person name="Grimmond S.M."/>
            <person name="Teasdale R.D."/>
            <person name="Liu E.T."/>
            <person name="Brusic V."/>
            <person name="Quackenbush J."/>
            <person name="Wahlestedt C."/>
            <person name="Mattick J.S."/>
            <person name="Hume D.A."/>
            <person name="Kai C."/>
            <person name="Sasaki D."/>
            <person name="Tomaru Y."/>
            <person name="Fukuda S."/>
            <person name="Kanamori-Katayama M."/>
            <person name="Suzuki M."/>
            <person name="Aoki J."/>
            <person name="Arakawa T."/>
            <person name="Iida J."/>
            <person name="Imamura K."/>
            <person name="Itoh M."/>
            <person name="Kato T."/>
            <person name="Kawaji H."/>
            <person name="Kawagashira N."/>
            <person name="Kawashima T."/>
            <person name="Kojima M."/>
            <person name="Kondo S."/>
            <person name="Konno H."/>
            <person name="Nakano K."/>
            <person name="Ninomiya N."/>
            <person name="Nishio T."/>
            <person name="Okada M."/>
            <person name="Plessy C."/>
            <person name="Shibata K."/>
            <person name="Shiraki T."/>
            <person name="Suzuki S."/>
            <person name="Tagami M."/>
            <person name="Waki K."/>
            <person name="Watahiki A."/>
            <person name="Okamura-Oho Y."/>
            <person name="Suzuki H."/>
            <person name="Kawai J."/>
            <person name="Hayashizaki Y."/>
        </authorList>
    </citation>
    <scope>NUCLEOTIDE SEQUENCE [LARGE SCALE MRNA] OF 358-582</scope>
    <source>
        <strain>C57BL/6J</strain>
        <tissue>Testis</tissue>
    </source>
</reference>
<reference key="6">
    <citation type="journal article" date="2005" name="Mol. Cell. Biol.">
        <title>Mice without the regulator gene Rsc1A1 exhibit increased Na+-D-glucose cotransport in small intestine and develop obesity.</title>
        <authorList>
            <person name="Osswald C."/>
            <person name="Baumgarten K."/>
            <person name="Stuempel F."/>
            <person name="Gorboulev V."/>
            <person name="Akimjanova M."/>
            <person name="Knobeloch K.-P."/>
            <person name="Horak I."/>
            <person name="Kluge R."/>
            <person name="Joost H.G."/>
            <person name="Koepsell H."/>
        </authorList>
    </citation>
    <scope>FUNCTION</scope>
    <scope>DISRUPTION PHENOTYPE</scope>
    <scope>SUBCELLULAR LOCATION</scope>
    <scope>TISSUE SPECIFICITY</scope>
</reference>
<reference key="7">
    <citation type="journal article" date="2005" name="Mol. Cell. Biol.">
        <title>IRIP, a new ischemia/reperfusion-inducible protein that participates in the regulation of transporter activity.</title>
        <authorList>
            <person name="Jiang W."/>
            <person name="Prokopenko O."/>
            <person name="Wong L."/>
            <person name="Inouye M."/>
            <person name="Mirochnitchenko O."/>
        </authorList>
    </citation>
    <scope>INTERACTION WITH YRDC</scope>
</reference>
<reference key="8">
    <citation type="journal article" date="2010" name="Cell">
        <title>A tissue-specific atlas of mouse protein phosphorylation and expression.</title>
        <authorList>
            <person name="Huttlin E.L."/>
            <person name="Jedrychowski M.P."/>
            <person name="Elias J.E."/>
            <person name="Goswami T."/>
            <person name="Rad R."/>
            <person name="Beausoleil S.A."/>
            <person name="Villen J."/>
            <person name="Haas W."/>
            <person name="Sowa M.E."/>
            <person name="Gygi S.P."/>
        </authorList>
    </citation>
    <scope>IDENTIFICATION BY MASS SPECTROMETRY [LARGE SCALE ANALYSIS]</scope>
    <source>
        <tissue>Heart</tissue>
        <tissue>Testis</tissue>
    </source>
</reference>
<organism>
    <name type="scientific">Mus musculus</name>
    <name type="common">Mouse</name>
    <dbReference type="NCBI Taxonomy" id="10090"/>
    <lineage>
        <taxon>Eukaryota</taxon>
        <taxon>Metazoa</taxon>
        <taxon>Chordata</taxon>
        <taxon>Craniata</taxon>
        <taxon>Vertebrata</taxon>
        <taxon>Euteleostomi</taxon>
        <taxon>Mammalia</taxon>
        <taxon>Eutheria</taxon>
        <taxon>Euarchontoglires</taxon>
        <taxon>Glires</taxon>
        <taxon>Rodentia</taxon>
        <taxon>Myomorpha</taxon>
        <taxon>Muroidea</taxon>
        <taxon>Muridae</taxon>
        <taxon>Murinae</taxon>
        <taxon>Mus</taxon>
        <taxon>Mus</taxon>
    </lineage>
</organism>